<name>Y5270_ARATH</name>
<proteinExistence type="evidence at transcript level"/>
<gene>
    <name type="ordered locus">At5g42700</name>
    <name type="ORF">MJB21.7</name>
</gene>
<feature type="chain" id="PRO_0000375152" description="B3 domain-containing protein At5g42700">
    <location>
        <begin position="1"/>
        <end position="211"/>
    </location>
</feature>
<feature type="DNA-binding region" description="TF-B3" evidence="1">
    <location>
        <begin position="110"/>
        <end position="201"/>
    </location>
</feature>
<dbReference type="EMBL" id="AB007647">
    <property type="protein sequence ID" value="BAB10626.1"/>
    <property type="status" value="ALT_SEQ"/>
    <property type="molecule type" value="Genomic_DNA"/>
</dbReference>
<dbReference type="EMBL" id="CP002688">
    <property type="status" value="NOT_ANNOTATED_CDS"/>
    <property type="molecule type" value="Genomic_DNA"/>
</dbReference>
<dbReference type="SMR" id="Q9FMZ4"/>
<dbReference type="BioGRID" id="19529">
    <property type="interactions" value="5"/>
</dbReference>
<dbReference type="FunCoup" id="Q9FMZ4">
    <property type="interactions" value="8"/>
</dbReference>
<dbReference type="IntAct" id="Q9FMZ4">
    <property type="interactions" value="5"/>
</dbReference>
<dbReference type="STRING" id="3702.Q9FMZ4"/>
<dbReference type="PaxDb" id="3702-AT5G42700.1"/>
<dbReference type="Araport" id="AT5G42700"/>
<dbReference type="TAIR" id="AT5G42700"/>
<dbReference type="eggNOG" id="ENOG502QRAZ">
    <property type="taxonomic scope" value="Eukaryota"/>
</dbReference>
<dbReference type="HOGENOM" id="CLU_058918_1_0_1"/>
<dbReference type="InParanoid" id="Q9FMZ4"/>
<dbReference type="PhylomeDB" id="Q9FMZ4"/>
<dbReference type="PRO" id="PR:Q9FMZ4"/>
<dbReference type="Proteomes" id="UP000006548">
    <property type="component" value="Chromosome 5"/>
</dbReference>
<dbReference type="ExpressionAtlas" id="Q9FMZ4">
    <property type="expression patterns" value="baseline and differential"/>
</dbReference>
<dbReference type="GO" id="GO:0005634">
    <property type="term" value="C:nucleus"/>
    <property type="evidence" value="ECO:0007669"/>
    <property type="project" value="UniProtKB-SubCell"/>
</dbReference>
<dbReference type="GO" id="GO:0003677">
    <property type="term" value="F:DNA binding"/>
    <property type="evidence" value="ECO:0007669"/>
    <property type="project" value="UniProtKB-KW"/>
</dbReference>
<dbReference type="CDD" id="cd10017">
    <property type="entry name" value="B3_DNA"/>
    <property type="match status" value="1"/>
</dbReference>
<dbReference type="Gene3D" id="2.40.330.10">
    <property type="entry name" value="DNA-binding pseudobarrel domain"/>
    <property type="match status" value="1"/>
</dbReference>
<dbReference type="InterPro" id="IPR003340">
    <property type="entry name" value="B3_DNA-bd"/>
</dbReference>
<dbReference type="InterPro" id="IPR015300">
    <property type="entry name" value="DNA-bd_pseudobarrel_sf"/>
</dbReference>
<dbReference type="InterPro" id="IPR044837">
    <property type="entry name" value="REM16-like"/>
</dbReference>
<dbReference type="PANTHER" id="PTHR31391:SF4">
    <property type="entry name" value="B3 DOMAIN-CONTAINING PROTEIN OS03G0184500"/>
    <property type="match status" value="1"/>
</dbReference>
<dbReference type="PANTHER" id="PTHR31391">
    <property type="entry name" value="B3 DOMAIN-CONTAINING PROTEIN OS11G0197600-RELATED"/>
    <property type="match status" value="1"/>
</dbReference>
<dbReference type="Pfam" id="PF02362">
    <property type="entry name" value="B3"/>
    <property type="match status" value="1"/>
</dbReference>
<dbReference type="SMART" id="SM01019">
    <property type="entry name" value="B3"/>
    <property type="match status" value="1"/>
</dbReference>
<dbReference type="SUPFAM" id="SSF101936">
    <property type="entry name" value="DNA-binding pseudobarrel domain"/>
    <property type="match status" value="1"/>
</dbReference>
<dbReference type="PROSITE" id="PS50863">
    <property type="entry name" value="B3"/>
    <property type="match status" value="1"/>
</dbReference>
<comment type="subcellular location">
    <subcellularLocation>
        <location evidence="1">Nucleus</location>
    </subcellularLocation>
</comment>
<comment type="sequence caution" evidence="2">
    <conflict type="erroneous gene model prediction">
        <sequence resource="EMBL-CDS" id="BAB10626"/>
    </conflict>
</comment>
<organism>
    <name type="scientific">Arabidopsis thaliana</name>
    <name type="common">Mouse-ear cress</name>
    <dbReference type="NCBI Taxonomy" id="3702"/>
    <lineage>
        <taxon>Eukaryota</taxon>
        <taxon>Viridiplantae</taxon>
        <taxon>Streptophyta</taxon>
        <taxon>Embryophyta</taxon>
        <taxon>Tracheophyta</taxon>
        <taxon>Spermatophyta</taxon>
        <taxon>Magnoliopsida</taxon>
        <taxon>eudicotyledons</taxon>
        <taxon>Gunneridae</taxon>
        <taxon>Pentapetalae</taxon>
        <taxon>rosids</taxon>
        <taxon>malvids</taxon>
        <taxon>Brassicales</taxon>
        <taxon>Brassicaceae</taxon>
        <taxon>Camelineae</taxon>
        <taxon>Arabidopsis</taxon>
    </lineage>
</organism>
<reference key="1">
    <citation type="journal article" date="1997" name="DNA Res.">
        <title>Structural analysis of Arabidopsis thaliana chromosome 5. III. Sequence features of the regions of 1,191,918 bp covered by seventeen physically assigned P1 clones.</title>
        <authorList>
            <person name="Nakamura Y."/>
            <person name="Sato S."/>
            <person name="Kaneko T."/>
            <person name="Kotani H."/>
            <person name="Asamizu E."/>
            <person name="Miyajima N."/>
            <person name="Tabata S."/>
        </authorList>
    </citation>
    <scope>NUCLEOTIDE SEQUENCE [LARGE SCALE GENOMIC DNA]</scope>
    <source>
        <strain>cv. Columbia</strain>
    </source>
</reference>
<reference key="2">
    <citation type="journal article" date="2017" name="Plant J.">
        <title>Araport11: a complete reannotation of the Arabidopsis thaliana reference genome.</title>
        <authorList>
            <person name="Cheng C.Y."/>
            <person name="Krishnakumar V."/>
            <person name="Chan A.P."/>
            <person name="Thibaud-Nissen F."/>
            <person name="Schobel S."/>
            <person name="Town C.D."/>
        </authorList>
    </citation>
    <scope>GENOME REANNOTATION</scope>
    <source>
        <strain>cv. Columbia</strain>
    </source>
</reference>
<reference key="3">
    <citation type="journal article" date="2008" name="Trends Plant Sci.">
        <title>The plant B3 superfamily.</title>
        <authorList>
            <person name="Swaminathan K."/>
            <person name="Peterson K."/>
            <person name="Jack T."/>
        </authorList>
    </citation>
    <scope>GENE FAMILY</scope>
</reference>
<protein>
    <recommendedName>
        <fullName>B3 domain-containing protein At5g42700</fullName>
    </recommendedName>
</protein>
<evidence type="ECO:0000255" key="1">
    <source>
        <dbReference type="PROSITE-ProRule" id="PRU00326"/>
    </source>
</evidence>
<evidence type="ECO:0000305" key="2"/>
<accession>Q9FMZ4</accession>
<keyword id="KW-0238">DNA-binding</keyword>
<keyword id="KW-0539">Nucleus</keyword>
<keyword id="KW-1185">Reference proteome</keyword>
<keyword id="KW-0804">Transcription</keyword>
<keyword id="KW-0805">Transcription regulation</keyword>
<sequence length="211" mass="24058">MVVEKQTKYEEFRLKRVEENKKRMEALNLPKLSQILNSTSVKISPMKKRSIPRTPEKKMVDVKRVHIQRRGVGKKRDLLNRVYVSEEIRDEAISRANKFQDELGSGYPSFVKSMLQSHVSGGFWLGLPVQFCKSHLGLHDGVITLIDEEGEEYETIYLARKNGLSGGWMGFAVAHNLAYGDTLVFELVRRTAFKVYITRVGSCGESSKDMS</sequence>